<keyword id="KW-0240">DNA-directed RNA polymerase</keyword>
<keyword id="KW-0460">Magnesium</keyword>
<keyword id="KW-0479">Metal-binding</keyword>
<keyword id="KW-0548">Nucleotidyltransferase</keyword>
<keyword id="KW-0804">Transcription</keyword>
<keyword id="KW-0808">Transferase</keyword>
<keyword id="KW-0862">Zinc</keyword>
<proteinExistence type="inferred from homology"/>
<protein>
    <recommendedName>
        <fullName evidence="1">DNA-directed RNA polymerase subunit beta'</fullName>
        <shortName evidence="1">RNAP subunit beta'</shortName>
        <ecNumber evidence="1">2.7.7.6</ecNumber>
    </recommendedName>
    <alternativeName>
        <fullName evidence="1">RNA polymerase subunit beta'</fullName>
    </alternativeName>
    <alternativeName>
        <fullName evidence="1">Transcriptase subunit beta'</fullName>
    </alternativeName>
</protein>
<comment type="function">
    <text evidence="1">DNA-dependent RNA polymerase catalyzes the transcription of DNA into RNA using the four ribonucleoside triphosphates as substrates.</text>
</comment>
<comment type="catalytic activity">
    <reaction evidence="1">
        <text>RNA(n) + a ribonucleoside 5'-triphosphate = RNA(n+1) + diphosphate</text>
        <dbReference type="Rhea" id="RHEA:21248"/>
        <dbReference type="Rhea" id="RHEA-COMP:14527"/>
        <dbReference type="Rhea" id="RHEA-COMP:17342"/>
        <dbReference type="ChEBI" id="CHEBI:33019"/>
        <dbReference type="ChEBI" id="CHEBI:61557"/>
        <dbReference type="ChEBI" id="CHEBI:140395"/>
        <dbReference type="EC" id="2.7.7.6"/>
    </reaction>
</comment>
<comment type="cofactor">
    <cofactor evidence="1">
        <name>Mg(2+)</name>
        <dbReference type="ChEBI" id="CHEBI:18420"/>
    </cofactor>
    <text evidence="1">Binds 1 Mg(2+) ion per subunit.</text>
</comment>
<comment type="cofactor">
    <cofactor evidence="1">
        <name>Zn(2+)</name>
        <dbReference type="ChEBI" id="CHEBI:29105"/>
    </cofactor>
    <text evidence="1">Binds 2 Zn(2+) ions per subunit.</text>
</comment>
<comment type="subunit">
    <text evidence="1">The RNAP catalytic core consists of 2 alpha, 1 beta, 1 beta' and 1 omega subunit. When a sigma factor is associated with the core the holoenzyme is formed, which can initiate transcription.</text>
</comment>
<comment type="similarity">
    <text evidence="1">Belongs to the RNA polymerase beta' chain family.</text>
</comment>
<evidence type="ECO:0000255" key="1">
    <source>
        <dbReference type="HAMAP-Rule" id="MF_01322"/>
    </source>
</evidence>
<name>RPOC_PSEPW</name>
<feature type="chain" id="PRO_1000141789" description="DNA-directed RNA polymerase subunit beta'">
    <location>
        <begin position="1"/>
        <end position="1399"/>
    </location>
</feature>
<feature type="binding site" evidence="1">
    <location>
        <position position="70"/>
    </location>
    <ligand>
        <name>Zn(2+)</name>
        <dbReference type="ChEBI" id="CHEBI:29105"/>
        <label>1</label>
    </ligand>
</feature>
<feature type="binding site" evidence="1">
    <location>
        <position position="72"/>
    </location>
    <ligand>
        <name>Zn(2+)</name>
        <dbReference type="ChEBI" id="CHEBI:29105"/>
        <label>1</label>
    </ligand>
</feature>
<feature type="binding site" evidence="1">
    <location>
        <position position="85"/>
    </location>
    <ligand>
        <name>Zn(2+)</name>
        <dbReference type="ChEBI" id="CHEBI:29105"/>
        <label>1</label>
    </ligand>
</feature>
<feature type="binding site" evidence="1">
    <location>
        <position position="88"/>
    </location>
    <ligand>
        <name>Zn(2+)</name>
        <dbReference type="ChEBI" id="CHEBI:29105"/>
        <label>1</label>
    </ligand>
</feature>
<feature type="binding site" evidence="1">
    <location>
        <position position="460"/>
    </location>
    <ligand>
        <name>Mg(2+)</name>
        <dbReference type="ChEBI" id="CHEBI:18420"/>
    </ligand>
</feature>
<feature type="binding site" evidence="1">
    <location>
        <position position="462"/>
    </location>
    <ligand>
        <name>Mg(2+)</name>
        <dbReference type="ChEBI" id="CHEBI:18420"/>
    </ligand>
</feature>
<feature type="binding site" evidence="1">
    <location>
        <position position="464"/>
    </location>
    <ligand>
        <name>Mg(2+)</name>
        <dbReference type="ChEBI" id="CHEBI:18420"/>
    </ligand>
</feature>
<feature type="binding site" evidence="1">
    <location>
        <position position="814"/>
    </location>
    <ligand>
        <name>Zn(2+)</name>
        <dbReference type="ChEBI" id="CHEBI:29105"/>
        <label>2</label>
    </ligand>
</feature>
<feature type="binding site" evidence="1">
    <location>
        <position position="888"/>
    </location>
    <ligand>
        <name>Zn(2+)</name>
        <dbReference type="ChEBI" id="CHEBI:29105"/>
        <label>2</label>
    </ligand>
</feature>
<feature type="binding site" evidence="1">
    <location>
        <position position="895"/>
    </location>
    <ligand>
        <name>Zn(2+)</name>
        <dbReference type="ChEBI" id="CHEBI:29105"/>
        <label>2</label>
    </ligand>
</feature>
<feature type="binding site" evidence="1">
    <location>
        <position position="898"/>
    </location>
    <ligand>
        <name>Zn(2+)</name>
        <dbReference type="ChEBI" id="CHEBI:29105"/>
        <label>2</label>
    </ligand>
</feature>
<gene>
    <name evidence="1" type="primary">rpoC</name>
    <name type="ordered locus">PputW619_4755</name>
</gene>
<dbReference type="EC" id="2.7.7.6" evidence="1"/>
<dbReference type="EMBL" id="CP000949">
    <property type="protein sequence ID" value="ACA75231.1"/>
    <property type="molecule type" value="Genomic_DNA"/>
</dbReference>
<dbReference type="SMR" id="B1JDX0"/>
<dbReference type="STRING" id="390235.PputW619_4755"/>
<dbReference type="KEGG" id="ppw:PputW619_4755"/>
<dbReference type="eggNOG" id="COG0086">
    <property type="taxonomic scope" value="Bacteria"/>
</dbReference>
<dbReference type="HOGENOM" id="CLU_000524_3_1_6"/>
<dbReference type="OrthoDB" id="9815296at2"/>
<dbReference type="GO" id="GO:0000428">
    <property type="term" value="C:DNA-directed RNA polymerase complex"/>
    <property type="evidence" value="ECO:0007669"/>
    <property type="project" value="UniProtKB-KW"/>
</dbReference>
<dbReference type="GO" id="GO:0003677">
    <property type="term" value="F:DNA binding"/>
    <property type="evidence" value="ECO:0007669"/>
    <property type="project" value="UniProtKB-UniRule"/>
</dbReference>
<dbReference type="GO" id="GO:0003899">
    <property type="term" value="F:DNA-directed RNA polymerase activity"/>
    <property type="evidence" value="ECO:0007669"/>
    <property type="project" value="UniProtKB-UniRule"/>
</dbReference>
<dbReference type="GO" id="GO:0000287">
    <property type="term" value="F:magnesium ion binding"/>
    <property type="evidence" value="ECO:0007669"/>
    <property type="project" value="UniProtKB-UniRule"/>
</dbReference>
<dbReference type="GO" id="GO:0008270">
    <property type="term" value="F:zinc ion binding"/>
    <property type="evidence" value="ECO:0007669"/>
    <property type="project" value="UniProtKB-UniRule"/>
</dbReference>
<dbReference type="GO" id="GO:0006351">
    <property type="term" value="P:DNA-templated transcription"/>
    <property type="evidence" value="ECO:0007669"/>
    <property type="project" value="UniProtKB-UniRule"/>
</dbReference>
<dbReference type="CDD" id="cd02655">
    <property type="entry name" value="RNAP_beta'_C"/>
    <property type="match status" value="1"/>
</dbReference>
<dbReference type="CDD" id="cd01609">
    <property type="entry name" value="RNAP_beta'_N"/>
    <property type="match status" value="1"/>
</dbReference>
<dbReference type="FunFam" id="1.10.132.30:FF:000003">
    <property type="entry name" value="DNA-directed RNA polymerase subunit beta"/>
    <property type="match status" value="1"/>
</dbReference>
<dbReference type="FunFam" id="1.10.150.390:FF:000002">
    <property type="entry name" value="DNA-directed RNA polymerase subunit beta"/>
    <property type="match status" value="1"/>
</dbReference>
<dbReference type="FunFam" id="1.10.40.90:FF:000001">
    <property type="entry name" value="DNA-directed RNA polymerase subunit beta"/>
    <property type="match status" value="1"/>
</dbReference>
<dbReference type="FunFam" id="4.10.860.120:FF:000001">
    <property type="entry name" value="DNA-directed RNA polymerase subunit beta"/>
    <property type="match status" value="1"/>
</dbReference>
<dbReference type="Gene3D" id="1.10.132.30">
    <property type="match status" value="1"/>
</dbReference>
<dbReference type="Gene3D" id="1.10.150.390">
    <property type="match status" value="1"/>
</dbReference>
<dbReference type="Gene3D" id="1.10.1790.20">
    <property type="match status" value="1"/>
</dbReference>
<dbReference type="Gene3D" id="1.10.40.90">
    <property type="match status" value="1"/>
</dbReference>
<dbReference type="Gene3D" id="2.40.40.20">
    <property type="match status" value="1"/>
</dbReference>
<dbReference type="Gene3D" id="2.40.50.100">
    <property type="match status" value="3"/>
</dbReference>
<dbReference type="Gene3D" id="4.10.860.120">
    <property type="entry name" value="RNA polymerase II, clamp domain"/>
    <property type="match status" value="1"/>
</dbReference>
<dbReference type="Gene3D" id="1.10.274.100">
    <property type="entry name" value="RNA polymerase Rpb1, domain 3"/>
    <property type="match status" value="1"/>
</dbReference>
<dbReference type="HAMAP" id="MF_01322">
    <property type="entry name" value="RNApol_bact_RpoC"/>
    <property type="match status" value="1"/>
</dbReference>
<dbReference type="InterPro" id="IPR045867">
    <property type="entry name" value="DNA-dir_RpoC_beta_prime"/>
</dbReference>
<dbReference type="InterPro" id="IPR012754">
    <property type="entry name" value="DNA-dir_RpoC_beta_prime_bact"/>
</dbReference>
<dbReference type="InterPro" id="IPR000722">
    <property type="entry name" value="RNA_pol_asu"/>
</dbReference>
<dbReference type="InterPro" id="IPR006592">
    <property type="entry name" value="RNA_pol_N"/>
</dbReference>
<dbReference type="InterPro" id="IPR007080">
    <property type="entry name" value="RNA_pol_Rpb1_1"/>
</dbReference>
<dbReference type="InterPro" id="IPR007066">
    <property type="entry name" value="RNA_pol_Rpb1_3"/>
</dbReference>
<dbReference type="InterPro" id="IPR042102">
    <property type="entry name" value="RNA_pol_Rpb1_3_sf"/>
</dbReference>
<dbReference type="InterPro" id="IPR007083">
    <property type="entry name" value="RNA_pol_Rpb1_4"/>
</dbReference>
<dbReference type="InterPro" id="IPR007081">
    <property type="entry name" value="RNA_pol_Rpb1_5"/>
</dbReference>
<dbReference type="InterPro" id="IPR044893">
    <property type="entry name" value="RNA_pol_Rpb1_clamp_domain"/>
</dbReference>
<dbReference type="InterPro" id="IPR038120">
    <property type="entry name" value="Rpb1_funnel_sf"/>
</dbReference>
<dbReference type="NCBIfam" id="TIGR02386">
    <property type="entry name" value="rpoC_TIGR"/>
    <property type="match status" value="1"/>
</dbReference>
<dbReference type="PANTHER" id="PTHR19376">
    <property type="entry name" value="DNA-DIRECTED RNA POLYMERASE"/>
    <property type="match status" value="1"/>
</dbReference>
<dbReference type="PANTHER" id="PTHR19376:SF54">
    <property type="entry name" value="DNA-DIRECTED RNA POLYMERASE SUBUNIT BETA"/>
    <property type="match status" value="1"/>
</dbReference>
<dbReference type="Pfam" id="PF04997">
    <property type="entry name" value="RNA_pol_Rpb1_1"/>
    <property type="match status" value="1"/>
</dbReference>
<dbReference type="Pfam" id="PF00623">
    <property type="entry name" value="RNA_pol_Rpb1_2"/>
    <property type="match status" value="2"/>
</dbReference>
<dbReference type="Pfam" id="PF04983">
    <property type="entry name" value="RNA_pol_Rpb1_3"/>
    <property type="match status" value="1"/>
</dbReference>
<dbReference type="Pfam" id="PF05000">
    <property type="entry name" value="RNA_pol_Rpb1_4"/>
    <property type="match status" value="1"/>
</dbReference>
<dbReference type="Pfam" id="PF04998">
    <property type="entry name" value="RNA_pol_Rpb1_5"/>
    <property type="match status" value="1"/>
</dbReference>
<dbReference type="SMART" id="SM00663">
    <property type="entry name" value="RPOLA_N"/>
    <property type="match status" value="1"/>
</dbReference>
<dbReference type="SUPFAM" id="SSF64484">
    <property type="entry name" value="beta and beta-prime subunits of DNA dependent RNA-polymerase"/>
    <property type="match status" value="1"/>
</dbReference>
<organism>
    <name type="scientific">Pseudomonas putida (strain W619)</name>
    <dbReference type="NCBI Taxonomy" id="390235"/>
    <lineage>
        <taxon>Bacteria</taxon>
        <taxon>Pseudomonadati</taxon>
        <taxon>Pseudomonadota</taxon>
        <taxon>Gammaproteobacteria</taxon>
        <taxon>Pseudomonadales</taxon>
        <taxon>Pseudomonadaceae</taxon>
        <taxon>Pseudomonas</taxon>
    </lineage>
</organism>
<reference key="1">
    <citation type="submission" date="2008-02" db="EMBL/GenBank/DDBJ databases">
        <title>Complete sequence of Pseudomonas putida W619.</title>
        <authorList>
            <person name="Copeland A."/>
            <person name="Lucas S."/>
            <person name="Lapidus A."/>
            <person name="Barry K."/>
            <person name="Detter J.C."/>
            <person name="Glavina del Rio T."/>
            <person name="Dalin E."/>
            <person name="Tice H."/>
            <person name="Pitluck S."/>
            <person name="Chain P."/>
            <person name="Malfatti S."/>
            <person name="Shin M."/>
            <person name="Vergez L."/>
            <person name="Schmutz J."/>
            <person name="Larimer F."/>
            <person name="Land M."/>
            <person name="Hauser L."/>
            <person name="Kyrpides N."/>
            <person name="Kim E."/>
            <person name="Taghavi S."/>
            <person name="Vangronsveld D."/>
            <person name="van der Lelie D."/>
            <person name="Richardson P."/>
        </authorList>
    </citation>
    <scope>NUCLEOTIDE SEQUENCE [LARGE SCALE GENOMIC DNA]</scope>
    <source>
        <strain>W619</strain>
    </source>
</reference>
<sequence length="1399" mass="154753">MKDLLNLLKNQGQVEEFDAIRIGLASPEMIRSWSFGEVKKPETINYRTFKPERDGLFCAKIFGPVKDYECLCGKYKRLKHRGVICEKCGVEVALAKVRRERMAHIELASPVAHIWFLKSLPSRIGLLMDMTLRDIERVLYFESYVVIDPGMTTLEKGQLLNDEQYFEALEEFGDDFDARMGAEAVRELLHAIDLEHEIGRLREEIPQTNSETKIKKLSKRLKLMEAFQGSGNLPEWMVLTVLPVLPPDLRPLVPLDGGRFATSDLNDLYRRVINRNNRLKRLLDLSAPDIIVRNEKRMLQEAVDALLDNGRRGRAITGSNKRPLKSLADMIKGKQGRFRQNLLGKRVDYSGRSVITVGPTLRLHQCGLPKKMALELFKPFIFGKLEMRGLATTIKAAKKMVERELPEVWDVLAEVIREHPVLLNRAPTLHRLGIQAFEPVLIEGKAIQLHPLVCAAYNADFDGDQMAVHVPLTLEAQLEARALMMSTNNILSPANGEPIIVPSQDVVLGLYYMTREAINAKGEGRVFADLQEVDRVFRAGEAALHAKIKVRINETVKDRDGSITKNTRIVDTTVGRALLFQVVPAGLPYDVVNQPMKKKAISKLINQCYRVVGLKETVIFADQLMYTGFAYSTISGVSIGVNDFVIPDEKARIIGSATDEVKEIESQYASGLVTQGEKYNKVIDLWSKANDEVSKAMMANLSKEKVIDREGKEVEQESFNSMYMMADSGARGSAAQIRQLAGMRGLMAKPDGSIIETPITANFREGLSVLQYFISTHGARKGLADTALKTANSGYLTRRLVDVAQDLVVTEIDCGTDHGLLMTPHIEGGDVVEPLGERVLGRVIARDVFKPGTEDVIVPAGTLVDEQWVEFIELNSIDEVVVRSPINCETRYGICAKCYGRDLARGHQVNIGEAVGVIAAQSIGEPGTQLTMRTFHIGGAASRTSAADSVQVKNGGMVRLHNLKQVERADGNLVAVSRSGELAIADEFGRERERYKLPYGAVISVKEGDKVEAGAIVAKWDPHTHPIVTELKGTVTFVGMEENITIKRQTDELTGLTNIEVLDVKDRPAAGKEIRPAIKMVDANGKDLYLPGTDVPAQYFLPANALVGVADGAQIGVGDVIARIPQETSKTRDITGGLPRVADLFEARRPKEASILAEVSGTIAFGKETKGKRRLVITPTDGSDPYEELIPKWRHLNVFEGEQVNRGEVISDGPSDPHDILRLLGVSALAKYIVNEIQDVYRLQGVKINDKHIETILRQMLRKVEISESGDSSFIKGDQMELTQVLVENERLAADDKFVSKFTRVLLGITKASLSTESFISAASFQETTRVLTEAAVTGKRDYLRGLKENVVVGRLIPAGTGLAYHSERKRRRDADKPLRVSASEVEAALTEALNSSGN</sequence>
<accession>B1JDX0</accession>